<gene>
    <name evidence="1" type="primary">sufE</name>
    <name type="ordered locus">KPN78578_21030</name>
    <name type="ORF">KPN_02136</name>
</gene>
<keyword id="KW-0963">Cytoplasm</keyword>
<name>SUFE_KLEP7</name>
<sequence length="138" mass="15573">MAALPDKDKLLRNFSRCANWEEKYLYIIELGQRLAPLSPEEHSVQNIIQGCQSQVWIVMDQDPTGVIALRGDSDAAIVKGLIAVVFILYDRMTAQDITEFDVRPWFEKMALTQHLTPSRSQGLEAMIRAIRAKAANIS</sequence>
<comment type="function">
    <text evidence="1">Participates in cysteine desulfuration mediated by SufS. Cysteine desulfuration mobilizes sulfur from L-cysteine to yield L-alanine and constitutes an essential step in sulfur metabolism for biosynthesis of a variety of sulfur-containing biomolecules. Functions as a sulfur acceptor for SufS, by mediating the direct transfer of the sulfur atom from the S-sulfanylcysteine of SufS, an intermediate product of cysteine desulfuration process.</text>
</comment>
<comment type="pathway">
    <text evidence="1">Cofactor biosynthesis; iron-sulfur cluster biosynthesis.</text>
</comment>
<comment type="subunit">
    <text evidence="1">Homodimer. Interacts with SufS.</text>
</comment>
<comment type="subcellular location">
    <subcellularLocation>
        <location evidence="1">Cytoplasm</location>
    </subcellularLocation>
</comment>
<comment type="similarity">
    <text evidence="1">Belongs to the SufE family.</text>
</comment>
<dbReference type="EMBL" id="CP000647">
    <property type="protein sequence ID" value="ABR77564.1"/>
    <property type="molecule type" value="Genomic_DNA"/>
</dbReference>
<dbReference type="RefSeq" id="WP_015958589.1">
    <property type="nucleotide sequence ID" value="NC_009648.1"/>
</dbReference>
<dbReference type="SMR" id="A6TAE3"/>
<dbReference type="STRING" id="272620.KPN_02136"/>
<dbReference type="PaxDb" id="272620-KPN_02136"/>
<dbReference type="EnsemblBacteria" id="ABR77564">
    <property type="protein sequence ID" value="ABR77564"/>
    <property type="gene ID" value="KPN_02136"/>
</dbReference>
<dbReference type="KEGG" id="kpn:KPN_02136"/>
<dbReference type="HOGENOM" id="CLU_124502_1_1_6"/>
<dbReference type="UniPathway" id="UPA00266"/>
<dbReference type="Proteomes" id="UP000000265">
    <property type="component" value="Chromosome"/>
</dbReference>
<dbReference type="GO" id="GO:0005737">
    <property type="term" value="C:cytoplasm"/>
    <property type="evidence" value="ECO:0007669"/>
    <property type="project" value="UniProtKB-SubCell"/>
</dbReference>
<dbReference type="GO" id="GO:0016226">
    <property type="term" value="P:iron-sulfur cluster assembly"/>
    <property type="evidence" value="ECO:0007669"/>
    <property type="project" value="InterPro"/>
</dbReference>
<dbReference type="GO" id="GO:0006790">
    <property type="term" value="P:sulfur compound metabolic process"/>
    <property type="evidence" value="ECO:0007669"/>
    <property type="project" value="InterPro"/>
</dbReference>
<dbReference type="Gene3D" id="3.90.1010.10">
    <property type="match status" value="1"/>
</dbReference>
<dbReference type="HAMAP" id="MF_01832">
    <property type="entry name" value="SufE"/>
    <property type="match status" value="1"/>
</dbReference>
<dbReference type="InterPro" id="IPR023939">
    <property type="entry name" value="Cysteine_desulfuration_SufE"/>
</dbReference>
<dbReference type="InterPro" id="IPR003808">
    <property type="entry name" value="Fe-S_metab-assoc_dom"/>
</dbReference>
<dbReference type="NCBIfam" id="NF006792">
    <property type="entry name" value="PRK09296.1"/>
    <property type="match status" value="1"/>
</dbReference>
<dbReference type="PANTHER" id="PTHR43597:SF3">
    <property type="entry name" value="CYSTEINE DESULFURATION PROTEIN SUFE"/>
    <property type="match status" value="1"/>
</dbReference>
<dbReference type="PANTHER" id="PTHR43597">
    <property type="entry name" value="SULFUR ACCEPTOR PROTEIN CSDE"/>
    <property type="match status" value="1"/>
</dbReference>
<dbReference type="Pfam" id="PF02657">
    <property type="entry name" value="SufE"/>
    <property type="match status" value="1"/>
</dbReference>
<dbReference type="SUPFAM" id="SSF82649">
    <property type="entry name" value="SufE/NifU"/>
    <property type="match status" value="1"/>
</dbReference>
<proteinExistence type="inferred from homology"/>
<evidence type="ECO:0000255" key="1">
    <source>
        <dbReference type="HAMAP-Rule" id="MF_01832"/>
    </source>
</evidence>
<organism>
    <name type="scientific">Klebsiella pneumoniae subsp. pneumoniae (strain ATCC 700721 / MGH 78578)</name>
    <dbReference type="NCBI Taxonomy" id="272620"/>
    <lineage>
        <taxon>Bacteria</taxon>
        <taxon>Pseudomonadati</taxon>
        <taxon>Pseudomonadota</taxon>
        <taxon>Gammaproteobacteria</taxon>
        <taxon>Enterobacterales</taxon>
        <taxon>Enterobacteriaceae</taxon>
        <taxon>Klebsiella/Raoultella group</taxon>
        <taxon>Klebsiella</taxon>
        <taxon>Klebsiella pneumoniae complex</taxon>
    </lineage>
</organism>
<protein>
    <recommendedName>
        <fullName evidence="1">Cysteine desulfuration protein SufE</fullName>
    </recommendedName>
</protein>
<accession>A6TAE3</accession>
<reference key="1">
    <citation type="submission" date="2006-09" db="EMBL/GenBank/DDBJ databases">
        <authorList>
            <consortium name="The Klebsiella pneumonia Genome Sequencing Project"/>
            <person name="McClelland M."/>
            <person name="Sanderson E.K."/>
            <person name="Spieth J."/>
            <person name="Clifton W.S."/>
            <person name="Latreille P."/>
            <person name="Sabo A."/>
            <person name="Pepin K."/>
            <person name="Bhonagiri V."/>
            <person name="Porwollik S."/>
            <person name="Ali J."/>
            <person name="Wilson R.K."/>
        </authorList>
    </citation>
    <scope>NUCLEOTIDE SEQUENCE [LARGE SCALE GENOMIC DNA]</scope>
    <source>
        <strain>ATCC 700721 / MGH 78578</strain>
    </source>
</reference>
<feature type="chain" id="PRO_1000070443" description="Cysteine desulfuration protein SufE">
    <location>
        <begin position="1"/>
        <end position="138"/>
    </location>
</feature>
<feature type="active site" description="Cysteine persulfide intermediate" evidence="1">
    <location>
        <position position="51"/>
    </location>
</feature>